<sequence>MGNKVVTFTEQELDDYQDCTFFTRKEILRVHKRFRELRPDLVPRQMTEGQASSVKVPCECIEKMPELRENPFRRRICEAFSRDGQGNLSFEDFLDALSVFSEQAPRDIKVFYAFKIYDFDQDGFIGHADLMSCLTTMTKNELSPEEHQQIADKVIEEADVDGDGKLSILEFEHVILRAPDFLSTFHIRI</sequence>
<feature type="chain" id="PRO_0000460692" description="Calcium and integrin-binding family member 2">
    <location>
        <begin position="1"/>
        <end position="189"/>
    </location>
</feature>
<feature type="domain" description="EF-hand 1" evidence="3">
    <location>
        <begin position="68"/>
        <end position="103"/>
    </location>
</feature>
<feature type="domain" description="EF-hand 2" evidence="3">
    <location>
        <begin position="105"/>
        <end position="140"/>
    </location>
</feature>
<feature type="domain" description="EF-hand 3" evidence="3">
    <location>
        <begin position="146"/>
        <end position="181"/>
    </location>
</feature>
<feature type="binding site" evidence="3">
    <location>
        <position position="118"/>
    </location>
    <ligand>
        <name>Ca(2+)</name>
        <dbReference type="ChEBI" id="CHEBI:29108"/>
        <label>1</label>
    </ligand>
</feature>
<feature type="binding site" evidence="3">
    <location>
        <position position="120"/>
    </location>
    <ligand>
        <name>Ca(2+)</name>
        <dbReference type="ChEBI" id="CHEBI:29108"/>
        <label>1</label>
    </ligand>
</feature>
<feature type="binding site" evidence="3">
    <location>
        <position position="122"/>
    </location>
    <ligand>
        <name>Ca(2+)</name>
        <dbReference type="ChEBI" id="CHEBI:29108"/>
        <label>1</label>
    </ligand>
</feature>
<feature type="binding site" evidence="3">
    <location>
        <position position="129"/>
    </location>
    <ligand>
        <name>Ca(2+)</name>
        <dbReference type="ChEBI" id="CHEBI:29108"/>
        <label>1</label>
    </ligand>
</feature>
<feature type="binding site" evidence="3">
    <location>
        <position position="159"/>
    </location>
    <ligand>
        <name>Ca(2+)</name>
        <dbReference type="ChEBI" id="CHEBI:29108"/>
        <label>2</label>
    </ligand>
</feature>
<feature type="binding site" evidence="3">
    <location>
        <position position="161"/>
    </location>
    <ligand>
        <name>Ca(2+)</name>
        <dbReference type="ChEBI" id="CHEBI:29108"/>
        <label>2</label>
    </ligand>
</feature>
<feature type="binding site" evidence="3">
    <location>
        <position position="163"/>
    </location>
    <ligand>
        <name>Ca(2+)</name>
        <dbReference type="ChEBI" id="CHEBI:29108"/>
        <label>2</label>
    </ligand>
</feature>
<feature type="binding site" evidence="3">
    <location>
        <position position="165"/>
    </location>
    <ligand>
        <name>Ca(2+)</name>
        <dbReference type="ChEBI" id="CHEBI:29108"/>
        <label>2</label>
    </ligand>
</feature>
<feature type="binding site" evidence="3">
    <location>
        <position position="170"/>
    </location>
    <ligand>
        <name>Ca(2+)</name>
        <dbReference type="ChEBI" id="CHEBI:29108"/>
        <label>2</label>
    </ligand>
</feature>
<proteinExistence type="inferred from homology"/>
<dbReference type="EMBL" id="AE013599">
    <property type="protein sequence ID" value="AAF46635.3"/>
    <property type="molecule type" value="Genomic_DNA"/>
</dbReference>
<dbReference type="RefSeq" id="NP_611523.3">
    <property type="nucleotide sequence ID" value="NM_137679.3"/>
</dbReference>
<dbReference type="SMR" id="Q9W2Q5"/>
<dbReference type="IntAct" id="Q9W2Q5">
    <property type="interactions" value="1"/>
</dbReference>
<dbReference type="STRING" id="7227.FBpp0293260"/>
<dbReference type="PaxDb" id="7227-FBpp0293260"/>
<dbReference type="DNASU" id="37363"/>
<dbReference type="EnsemblMetazoa" id="FBtr0304717">
    <property type="protein sequence ID" value="FBpp0293260"/>
    <property type="gene ID" value="FBgn0034558"/>
</dbReference>
<dbReference type="GeneID" id="37363"/>
<dbReference type="KEGG" id="dme:Dmel_CG9236"/>
<dbReference type="UCSC" id="CG9236-RA">
    <property type="organism name" value="d. melanogaster"/>
</dbReference>
<dbReference type="AGR" id="FB:FBgn0034558"/>
<dbReference type="CTD" id="10518"/>
<dbReference type="FlyBase" id="FBgn0034558">
    <property type="gene designation" value="Cib2"/>
</dbReference>
<dbReference type="VEuPathDB" id="VectorBase:FBgn0034558"/>
<dbReference type="eggNOG" id="KOG0038">
    <property type="taxonomic scope" value="Eukaryota"/>
</dbReference>
<dbReference type="GeneTree" id="ENSGT00940000169664"/>
<dbReference type="HOGENOM" id="CLU_061288_6_0_1"/>
<dbReference type="InParanoid" id="Q9W2Q5"/>
<dbReference type="OMA" id="RDIKAWY"/>
<dbReference type="OrthoDB" id="114727at2759"/>
<dbReference type="PhylomeDB" id="Q9W2Q5"/>
<dbReference type="BioGRID-ORCS" id="37363">
    <property type="hits" value="0 hits in 3 CRISPR screens"/>
</dbReference>
<dbReference type="GenomeRNAi" id="37363"/>
<dbReference type="Proteomes" id="UP000000803">
    <property type="component" value="Chromosome 2R"/>
</dbReference>
<dbReference type="Bgee" id="FBgn0034558">
    <property type="expression patterns" value="Expressed in nociceptive neuron in imaginal disc-derived wing and 8 other cell types or tissues"/>
</dbReference>
<dbReference type="ExpressionAtlas" id="Q9W2Q5">
    <property type="expression patterns" value="baseline and differential"/>
</dbReference>
<dbReference type="GO" id="GO:0005737">
    <property type="term" value="C:cytoplasm"/>
    <property type="evidence" value="ECO:0007669"/>
    <property type="project" value="UniProtKB-SubCell"/>
</dbReference>
<dbReference type="GO" id="GO:0005509">
    <property type="term" value="F:calcium ion binding"/>
    <property type="evidence" value="ECO:0000318"/>
    <property type="project" value="GO_Central"/>
</dbReference>
<dbReference type="GO" id="GO:0000287">
    <property type="term" value="F:magnesium ion binding"/>
    <property type="evidence" value="ECO:0000318"/>
    <property type="project" value="GO_Central"/>
</dbReference>
<dbReference type="GO" id="GO:0055074">
    <property type="term" value="P:calcium ion homeostasis"/>
    <property type="evidence" value="ECO:0000315"/>
    <property type="project" value="FlyBase"/>
</dbReference>
<dbReference type="GO" id="GO:0007602">
    <property type="term" value="P:phototransduction"/>
    <property type="evidence" value="ECO:0000315"/>
    <property type="project" value="FlyBase"/>
</dbReference>
<dbReference type="CDD" id="cd00051">
    <property type="entry name" value="EFh"/>
    <property type="match status" value="1"/>
</dbReference>
<dbReference type="FunFam" id="1.10.238.10:FF:000079">
    <property type="entry name" value="Calcium and integrin-binding family member 2"/>
    <property type="match status" value="1"/>
</dbReference>
<dbReference type="Gene3D" id="1.10.238.10">
    <property type="entry name" value="EF-hand"/>
    <property type="match status" value="2"/>
</dbReference>
<dbReference type="InterPro" id="IPR051433">
    <property type="entry name" value="CIBP"/>
</dbReference>
<dbReference type="InterPro" id="IPR011992">
    <property type="entry name" value="EF-hand-dom_pair"/>
</dbReference>
<dbReference type="InterPro" id="IPR018247">
    <property type="entry name" value="EF_Hand_1_Ca_BS"/>
</dbReference>
<dbReference type="InterPro" id="IPR002048">
    <property type="entry name" value="EF_hand_dom"/>
</dbReference>
<dbReference type="PANTHER" id="PTHR45791">
    <property type="entry name" value="CALCIUM AND INTEGRIN BINDING FAMILY MEMBER 2"/>
    <property type="match status" value="1"/>
</dbReference>
<dbReference type="PANTHER" id="PTHR45791:SF6">
    <property type="entry name" value="CALCIUM AND INTEGRIN BINDING FAMILY MEMBER 2"/>
    <property type="match status" value="1"/>
</dbReference>
<dbReference type="Pfam" id="PF13499">
    <property type="entry name" value="EF-hand_7"/>
    <property type="match status" value="1"/>
</dbReference>
<dbReference type="SMART" id="SM00054">
    <property type="entry name" value="EFh"/>
    <property type="match status" value="3"/>
</dbReference>
<dbReference type="SUPFAM" id="SSF47473">
    <property type="entry name" value="EF-hand"/>
    <property type="match status" value="1"/>
</dbReference>
<dbReference type="PROSITE" id="PS00018">
    <property type="entry name" value="EF_HAND_1"/>
    <property type="match status" value="2"/>
</dbReference>
<dbReference type="PROSITE" id="PS50222">
    <property type="entry name" value="EF_HAND_2"/>
    <property type="match status" value="3"/>
</dbReference>
<gene>
    <name evidence="6" type="primary">Cib2</name>
    <name evidence="6" type="ORF">CG9236</name>
</gene>
<keyword id="KW-0106">Calcium</keyword>
<keyword id="KW-0963">Cytoplasm</keyword>
<keyword id="KW-0460">Magnesium</keyword>
<keyword id="KW-0479">Metal-binding</keyword>
<keyword id="KW-1185">Reference proteome</keyword>
<keyword id="KW-0677">Repeat</keyword>
<comment type="function">
    <text evidence="2 4">Calcium- and integrin-binding protein (By similarity). Plays a role in intracellular calcium homeostasis (PubMed:23023331). Critical for proper photoreceptor cell maintenance and function (PubMed:23023331). Required for prevention of light-dependent retinal degeneration (PubMed:23023331).</text>
</comment>
<comment type="subunit">
    <text evidence="1">Monomer (By similarity). Homodimer (By similarity).</text>
</comment>
<comment type="subcellular location">
    <subcellularLocation>
        <location evidence="2">Cytoplasm</location>
    </subcellularLocation>
</comment>
<comment type="disruption phenotype">
    <text evidence="4">RNAi-mediated knockdown results in reduced photoresponse and impaired responses to flicker stimuli at high frequencies (PubMed:23023331). Failure to sustain an adequate photoresponse during prolonged stimulation (PubMed:23023331). No obvious eye dysmorphology when raised under 12 hr:12 hr light-dark conditions (PubMed:23023331). Significant photoreceptor degeneration when raised under constant light for 5 days (PubMed:23023331).</text>
</comment>
<comment type="miscellaneous">
    <text evidence="1">The binding of either calcium or magnesium significantly increases the structural stability of the protein in comparison to apo-CIB (calcium- and magnesium-free form).</text>
</comment>
<organism evidence="7">
    <name type="scientific">Drosophila melanogaster</name>
    <name type="common">Fruit fly</name>
    <dbReference type="NCBI Taxonomy" id="7227"/>
    <lineage>
        <taxon>Eukaryota</taxon>
        <taxon>Metazoa</taxon>
        <taxon>Ecdysozoa</taxon>
        <taxon>Arthropoda</taxon>
        <taxon>Hexapoda</taxon>
        <taxon>Insecta</taxon>
        <taxon>Pterygota</taxon>
        <taxon>Neoptera</taxon>
        <taxon>Endopterygota</taxon>
        <taxon>Diptera</taxon>
        <taxon>Brachycera</taxon>
        <taxon>Muscomorpha</taxon>
        <taxon>Ephydroidea</taxon>
        <taxon>Drosophilidae</taxon>
        <taxon>Drosophila</taxon>
        <taxon>Sophophora</taxon>
    </lineage>
</organism>
<name>CIB2_DROME</name>
<accession>Q9W2Q5</accession>
<protein>
    <recommendedName>
        <fullName evidence="6">Calcium and integrin-binding family member 2</fullName>
    </recommendedName>
</protein>
<reference evidence="7" key="1">
    <citation type="journal article" date="2000" name="Science">
        <title>The genome sequence of Drosophila melanogaster.</title>
        <authorList>
            <person name="Adams M.D."/>
            <person name="Celniker S.E."/>
            <person name="Holt R.A."/>
            <person name="Evans C.A."/>
            <person name="Gocayne J.D."/>
            <person name="Amanatides P.G."/>
            <person name="Scherer S.E."/>
            <person name="Li P.W."/>
            <person name="Hoskins R.A."/>
            <person name="Galle R.F."/>
            <person name="George R.A."/>
            <person name="Lewis S.E."/>
            <person name="Richards S."/>
            <person name="Ashburner M."/>
            <person name="Henderson S.N."/>
            <person name="Sutton G.G."/>
            <person name="Wortman J.R."/>
            <person name="Yandell M.D."/>
            <person name="Zhang Q."/>
            <person name="Chen L.X."/>
            <person name="Brandon R.C."/>
            <person name="Rogers Y.-H.C."/>
            <person name="Blazej R.G."/>
            <person name="Champe M."/>
            <person name="Pfeiffer B.D."/>
            <person name="Wan K.H."/>
            <person name="Doyle C."/>
            <person name="Baxter E.G."/>
            <person name="Helt G."/>
            <person name="Nelson C.R."/>
            <person name="Miklos G.L.G."/>
            <person name="Abril J.F."/>
            <person name="Agbayani A."/>
            <person name="An H.-J."/>
            <person name="Andrews-Pfannkoch C."/>
            <person name="Baldwin D."/>
            <person name="Ballew R.M."/>
            <person name="Basu A."/>
            <person name="Baxendale J."/>
            <person name="Bayraktaroglu L."/>
            <person name="Beasley E.M."/>
            <person name="Beeson K.Y."/>
            <person name="Benos P.V."/>
            <person name="Berman B.P."/>
            <person name="Bhandari D."/>
            <person name="Bolshakov S."/>
            <person name="Borkova D."/>
            <person name="Botchan M.R."/>
            <person name="Bouck J."/>
            <person name="Brokstein P."/>
            <person name="Brottier P."/>
            <person name="Burtis K.C."/>
            <person name="Busam D.A."/>
            <person name="Butler H."/>
            <person name="Cadieu E."/>
            <person name="Center A."/>
            <person name="Chandra I."/>
            <person name="Cherry J.M."/>
            <person name="Cawley S."/>
            <person name="Dahlke C."/>
            <person name="Davenport L.B."/>
            <person name="Davies P."/>
            <person name="de Pablos B."/>
            <person name="Delcher A."/>
            <person name="Deng Z."/>
            <person name="Mays A.D."/>
            <person name="Dew I."/>
            <person name="Dietz S.M."/>
            <person name="Dodson K."/>
            <person name="Doup L.E."/>
            <person name="Downes M."/>
            <person name="Dugan-Rocha S."/>
            <person name="Dunkov B.C."/>
            <person name="Dunn P."/>
            <person name="Durbin K.J."/>
            <person name="Evangelista C.C."/>
            <person name="Ferraz C."/>
            <person name="Ferriera S."/>
            <person name="Fleischmann W."/>
            <person name="Fosler C."/>
            <person name="Gabrielian A.E."/>
            <person name="Garg N.S."/>
            <person name="Gelbart W.M."/>
            <person name="Glasser K."/>
            <person name="Glodek A."/>
            <person name="Gong F."/>
            <person name="Gorrell J.H."/>
            <person name="Gu Z."/>
            <person name="Guan P."/>
            <person name="Harris M."/>
            <person name="Harris N.L."/>
            <person name="Harvey D.A."/>
            <person name="Heiman T.J."/>
            <person name="Hernandez J.R."/>
            <person name="Houck J."/>
            <person name="Hostin D."/>
            <person name="Houston K.A."/>
            <person name="Howland T.J."/>
            <person name="Wei M.-H."/>
            <person name="Ibegwam C."/>
            <person name="Jalali M."/>
            <person name="Kalush F."/>
            <person name="Karpen G.H."/>
            <person name="Ke Z."/>
            <person name="Kennison J.A."/>
            <person name="Ketchum K.A."/>
            <person name="Kimmel B.E."/>
            <person name="Kodira C.D."/>
            <person name="Kraft C.L."/>
            <person name="Kravitz S."/>
            <person name="Kulp D."/>
            <person name="Lai Z."/>
            <person name="Lasko P."/>
            <person name="Lei Y."/>
            <person name="Levitsky A.A."/>
            <person name="Li J.H."/>
            <person name="Li Z."/>
            <person name="Liang Y."/>
            <person name="Lin X."/>
            <person name="Liu X."/>
            <person name="Mattei B."/>
            <person name="McIntosh T.C."/>
            <person name="McLeod M.P."/>
            <person name="McPherson D."/>
            <person name="Merkulov G."/>
            <person name="Milshina N.V."/>
            <person name="Mobarry C."/>
            <person name="Morris J."/>
            <person name="Moshrefi A."/>
            <person name="Mount S.M."/>
            <person name="Moy M."/>
            <person name="Murphy B."/>
            <person name="Murphy L."/>
            <person name="Muzny D.M."/>
            <person name="Nelson D.L."/>
            <person name="Nelson D.R."/>
            <person name="Nelson K.A."/>
            <person name="Nixon K."/>
            <person name="Nusskern D.R."/>
            <person name="Pacleb J.M."/>
            <person name="Palazzolo M."/>
            <person name="Pittman G.S."/>
            <person name="Pan S."/>
            <person name="Pollard J."/>
            <person name="Puri V."/>
            <person name="Reese M.G."/>
            <person name="Reinert K."/>
            <person name="Remington K."/>
            <person name="Saunders R.D.C."/>
            <person name="Scheeler F."/>
            <person name="Shen H."/>
            <person name="Shue B.C."/>
            <person name="Siden-Kiamos I."/>
            <person name="Simpson M."/>
            <person name="Skupski M.P."/>
            <person name="Smith T.J."/>
            <person name="Spier E."/>
            <person name="Spradling A.C."/>
            <person name="Stapleton M."/>
            <person name="Strong R."/>
            <person name="Sun E."/>
            <person name="Svirskas R."/>
            <person name="Tector C."/>
            <person name="Turner R."/>
            <person name="Venter E."/>
            <person name="Wang A.H."/>
            <person name="Wang X."/>
            <person name="Wang Z.-Y."/>
            <person name="Wassarman D.A."/>
            <person name="Weinstock G.M."/>
            <person name="Weissenbach J."/>
            <person name="Williams S.M."/>
            <person name="Woodage T."/>
            <person name="Worley K.C."/>
            <person name="Wu D."/>
            <person name="Yang S."/>
            <person name="Yao Q.A."/>
            <person name="Ye J."/>
            <person name="Yeh R.-F."/>
            <person name="Zaveri J.S."/>
            <person name="Zhan M."/>
            <person name="Zhang G."/>
            <person name="Zhao Q."/>
            <person name="Zheng L."/>
            <person name="Zheng X.H."/>
            <person name="Zhong F.N."/>
            <person name="Zhong W."/>
            <person name="Zhou X."/>
            <person name="Zhu S.C."/>
            <person name="Zhu X."/>
            <person name="Smith H.O."/>
            <person name="Gibbs R.A."/>
            <person name="Myers E.W."/>
            <person name="Rubin G.M."/>
            <person name="Venter J.C."/>
        </authorList>
    </citation>
    <scope>NUCLEOTIDE SEQUENCE [LARGE SCALE GENOMIC DNA]</scope>
    <source>
        <strain evidence="7">Berkeley</strain>
    </source>
</reference>
<reference evidence="7" key="2">
    <citation type="journal article" date="2002" name="Genome Biol.">
        <title>Annotation of the Drosophila melanogaster euchromatic genome: a systematic review.</title>
        <authorList>
            <person name="Misra S."/>
            <person name="Crosby M.A."/>
            <person name="Mungall C.J."/>
            <person name="Matthews B.B."/>
            <person name="Campbell K.S."/>
            <person name="Hradecky P."/>
            <person name="Huang Y."/>
            <person name="Kaminker J.S."/>
            <person name="Millburn G.H."/>
            <person name="Prochnik S.E."/>
            <person name="Smith C.D."/>
            <person name="Tupy J.L."/>
            <person name="Whitfield E.J."/>
            <person name="Bayraktaroglu L."/>
            <person name="Berman B.P."/>
            <person name="Bettencourt B.R."/>
            <person name="Celniker S.E."/>
            <person name="de Grey A.D.N.J."/>
            <person name="Drysdale R.A."/>
            <person name="Harris N.L."/>
            <person name="Richter J."/>
            <person name="Russo S."/>
            <person name="Schroeder A.J."/>
            <person name="Shu S.Q."/>
            <person name="Stapleton M."/>
            <person name="Yamada C."/>
            <person name="Ashburner M."/>
            <person name="Gelbart W.M."/>
            <person name="Rubin G.M."/>
            <person name="Lewis S.E."/>
        </authorList>
    </citation>
    <scope>GENOME REANNOTATION</scope>
    <source>
        <strain evidence="7">Berkeley</strain>
    </source>
</reference>
<reference evidence="5" key="3">
    <citation type="journal article" date="2012" name="Nat. Genet.">
        <title>Alterations of the CIB2 calcium- and integrin-binding protein cause Usher syndrome type 1J and nonsyndromic deafness DFNB48.</title>
        <authorList>
            <person name="Riazuddin S."/>
            <person name="Belyantseva I.A."/>
            <person name="Giese A.P."/>
            <person name="Lee K."/>
            <person name="Indzhykulian A.A."/>
            <person name="Nandamuri S.P."/>
            <person name="Yousaf R."/>
            <person name="Sinha G.P."/>
            <person name="Lee S."/>
            <person name="Terrell D."/>
            <person name="Hegde R.S."/>
            <person name="Ali R.A."/>
            <person name="Anwar S."/>
            <person name="Andrade-Elizondo P.B."/>
            <person name="Sirmaci A."/>
            <person name="Parise L.V."/>
            <person name="Basit S."/>
            <person name="Wali A."/>
            <person name="Ayub M."/>
            <person name="Ansar M."/>
            <person name="Ahmad W."/>
            <person name="Khan S.N."/>
            <person name="Akram J."/>
            <person name="Tekin M."/>
            <person name="Riazuddin S."/>
            <person name="Cook T."/>
            <person name="Buschbeck E.K."/>
            <person name="Frolenkov G.I."/>
            <person name="Leal S.M."/>
            <person name="Friedman T.B."/>
            <person name="Ahmed Z.M."/>
        </authorList>
    </citation>
    <scope>FUNCTION</scope>
    <scope>DISRUPTION PHENOTYPE</scope>
</reference>
<evidence type="ECO:0000250" key="1">
    <source>
        <dbReference type="UniProtKB" id="O75838"/>
    </source>
</evidence>
<evidence type="ECO:0000250" key="2">
    <source>
        <dbReference type="UniProtKB" id="Q9Z309"/>
    </source>
</evidence>
<evidence type="ECO:0000255" key="3">
    <source>
        <dbReference type="PROSITE-ProRule" id="PRU00448"/>
    </source>
</evidence>
<evidence type="ECO:0000269" key="4">
    <source>
    </source>
</evidence>
<evidence type="ECO:0000305" key="5"/>
<evidence type="ECO:0000312" key="6">
    <source>
        <dbReference type="FlyBase" id="FBgn0034558"/>
    </source>
</evidence>
<evidence type="ECO:0000312" key="7">
    <source>
        <dbReference type="Proteomes" id="UP000000803"/>
    </source>
</evidence>